<dbReference type="EMBL" id="D38254">
    <property type="protein sequence ID" value="BAA07408.1"/>
    <property type="molecule type" value="Genomic_DNA"/>
</dbReference>
<dbReference type="EMBL" id="AE005674">
    <property type="protein sequence ID" value="AAN42789.2"/>
    <property type="molecule type" value="Genomic_DNA"/>
</dbReference>
<dbReference type="EMBL" id="AE014073">
    <property type="protein sequence ID" value="AAP16680.1"/>
    <property type="molecule type" value="Genomic_DNA"/>
</dbReference>
<dbReference type="RefSeq" id="NP_707082.2">
    <property type="nucleotide sequence ID" value="NC_004337.2"/>
</dbReference>
<dbReference type="RefSeq" id="WP_000943462.1">
    <property type="nucleotide sequence ID" value="NZ_WPGW01000047.1"/>
</dbReference>
<dbReference type="SMR" id="Q54155"/>
<dbReference type="STRING" id="198214.SF1174"/>
<dbReference type="PaxDb" id="198214-SF1174"/>
<dbReference type="GeneID" id="1024123"/>
<dbReference type="KEGG" id="sfl:SF1174"/>
<dbReference type="KEGG" id="sfx:S1262"/>
<dbReference type="PATRIC" id="fig|198214.7.peg.1388"/>
<dbReference type="HOGENOM" id="CLU_098660_2_0_6"/>
<dbReference type="Proteomes" id="UP000001006">
    <property type="component" value="Chromosome"/>
</dbReference>
<dbReference type="Proteomes" id="UP000002673">
    <property type="component" value="Chromosome"/>
</dbReference>
<dbReference type="GO" id="GO:0005886">
    <property type="term" value="C:plasma membrane"/>
    <property type="evidence" value="ECO:0007669"/>
    <property type="project" value="UniProtKB-SubCell"/>
</dbReference>
<dbReference type="GO" id="GO:0009055">
    <property type="term" value="F:electron transfer activity"/>
    <property type="evidence" value="ECO:0007669"/>
    <property type="project" value="UniProtKB-UniRule"/>
</dbReference>
<dbReference type="GO" id="GO:0015035">
    <property type="term" value="F:protein-disulfide reductase activity"/>
    <property type="evidence" value="ECO:0007669"/>
    <property type="project" value="UniProtKB-UniRule"/>
</dbReference>
<dbReference type="GO" id="GO:0006457">
    <property type="term" value="P:protein folding"/>
    <property type="evidence" value="ECO:0007669"/>
    <property type="project" value="InterPro"/>
</dbReference>
<dbReference type="FunFam" id="1.20.1550.10:FF:000001">
    <property type="entry name" value="Disulfide bond formation protein B"/>
    <property type="match status" value="1"/>
</dbReference>
<dbReference type="Gene3D" id="1.20.1550.10">
    <property type="entry name" value="DsbB-like"/>
    <property type="match status" value="1"/>
</dbReference>
<dbReference type="HAMAP" id="MF_00286">
    <property type="entry name" value="DsbB"/>
    <property type="match status" value="1"/>
</dbReference>
<dbReference type="InterPro" id="IPR003752">
    <property type="entry name" value="DiS_bond_form_DsbB/BdbC"/>
</dbReference>
<dbReference type="InterPro" id="IPR022920">
    <property type="entry name" value="Disulphide_bond_form_DsbB"/>
</dbReference>
<dbReference type="InterPro" id="IPR050183">
    <property type="entry name" value="DsbB"/>
</dbReference>
<dbReference type="InterPro" id="IPR023380">
    <property type="entry name" value="DsbB-like_sf"/>
</dbReference>
<dbReference type="NCBIfam" id="NF002485">
    <property type="entry name" value="PRK01749.1"/>
    <property type="match status" value="1"/>
</dbReference>
<dbReference type="PANTHER" id="PTHR36570">
    <property type="entry name" value="DISULFIDE BOND FORMATION PROTEIN B"/>
    <property type="match status" value="1"/>
</dbReference>
<dbReference type="PANTHER" id="PTHR36570:SF2">
    <property type="entry name" value="DISULFIDE BOND FORMATION PROTEIN B"/>
    <property type="match status" value="1"/>
</dbReference>
<dbReference type="Pfam" id="PF02600">
    <property type="entry name" value="DsbB"/>
    <property type="match status" value="1"/>
</dbReference>
<dbReference type="SUPFAM" id="SSF158442">
    <property type="entry name" value="DsbB-like"/>
    <property type="match status" value="1"/>
</dbReference>
<protein>
    <recommendedName>
        <fullName evidence="2">Disulfide bond formation protein B</fullName>
    </recommendedName>
    <alternativeName>
        <fullName evidence="2">Disulfide oxidoreductase</fullName>
    </alternativeName>
</protein>
<organism>
    <name type="scientific">Shigella flexneri</name>
    <dbReference type="NCBI Taxonomy" id="623"/>
    <lineage>
        <taxon>Bacteria</taxon>
        <taxon>Pseudomonadati</taxon>
        <taxon>Pseudomonadota</taxon>
        <taxon>Gammaproteobacteria</taxon>
        <taxon>Enterobacterales</taxon>
        <taxon>Enterobacteriaceae</taxon>
        <taxon>Shigella</taxon>
    </lineage>
</organism>
<sequence length="176" mass="20160">MLRFLNQCSQGRGAWLLMAFTALALELTALWFQHVMLLKPCVLCIYERCALFGVLGAALIGAIAPKTPLRYVAMVIWLYSAFRGVQLTYEHTMLQLYPSPFATCDFMVRFPEWLPLDKWVPQVFVASGDCAERQWDFLGMEMPQWLLGIFIAYLIVAVLVVISQPFKAKKRDLFGR</sequence>
<name>DSBB_SHIFL</name>
<gene>
    <name evidence="2" type="primary">dsbB</name>
    <name type="ordered locus">SF1174</name>
    <name type="ordered locus">S1262</name>
</gene>
<keyword id="KW-0997">Cell inner membrane</keyword>
<keyword id="KW-1003">Cell membrane</keyword>
<keyword id="KW-0143">Chaperone</keyword>
<keyword id="KW-1015">Disulfide bond</keyword>
<keyword id="KW-0249">Electron transport</keyword>
<keyword id="KW-0472">Membrane</keyword>
<keyword id="KW-0560">Oxidoreductase</keyword>
<keyword id="KW-0676">Redox-active center</keyword>
<keyword id="KW-1185">Reference proteome</keyword>
<keyword id="KW-0812">Transmembrane</keyword>
<keyword id="KW-1133">Transmembrane helix</keyword>
<keyword id="KW-0813">Transport</keyword>
<comment type="function">
    <text evidence="1">Required for disulfide bond formation in some periplasmic proteins such as PhoA or OmpA. Acts by oxidizing the DsbA protein (By similarity).</text>
</comment>
<comment type="subcellular location">
    <subcellularLocation>
        <location evidence="2">Cell inner membrane</location>
        <topology evidence="2">Multi-pass membrane protein</topology>
    </subcellularLocation>
</comment>
<comment type="similarity">
    <text evidence="2">Belongs to the DsbB family.</text>
</comment>
<proteinExistence type="inferred from homology"/>
<evidence type="ECO:0000250" key="1"/>
<evidence type="ECO:0000255" key="2">
    <source>
        <dbReference type="HAMAP-Rule" id="MF_00286"/>
    </source>
</evidence>
<evidence type="ECO:0000305" key="3"/>
<accession>Q54155</accession>
<reference key="1">
    <citation type="journal article" date="1995" name="Proc. Natl. Acad. Sci. U.S.A.">
        <title>Disulfide oxidoreductase activity of Shigella flexneri is required for release of Ipa proteins and invasion of epithelial cells.</title>
        <authorList>
            <person name="Watarai M."/>
            <person name="Tobe T."/>
            <person name="Yoshikawa M."/>
            <person name="Sasakawa C."/>
        </authorList>
    </citation>
    <scope>NUCLEOTIDE SEQUENCE [GENOMIC DNA]</scope>
    <source>
        <strain>YSH6000 / Serotype 2a</strain>
    </source>
</reference>
<reference key="2">
    <citation type="journal article" date="2002" name="Nucleic Acids Res.">
        <title>Genome sequence of Shigella flexneri 2a: insights into pathogenicity through comparison with genomes of Escherichia coli K12 and O157.</title>
        <authorList>
            <person name="Jin Q."/>
            <person name="Yuan Z."/>
            <person name="Xu J."/>
            <person name="Wang Y."/>
            <person name="Shen Y."/>
            <person name="Lu W."/>
            <person name="Wang J."/>
            <person name="Liu H."/>
            <person name="Yang J."/>
            <person name="Yang F."/>
            <person name="Zhang X."/>
            <person name="Zhang J."/>
            <person name="Yang G."/>
            <person name="Wu H."/>
            <person name="Qu D."/>
            <person name="Dong J."/>
            <person name="Sun L."/>
            <person name="Xue Y."/>
            <person name="Zhao A."/>
            <person name="Gao Y."/>
            <person name="Zhu J."/>
            <person name="Kan B."/>
            <person name="Ding K."/>
            <person name="Chen S."/>
            <person name="Cheng H."/>
            <person name="Yao Z."/>
            <person name="He B."/>
            <person name="Chen R."/>
            <person name="Ma D."/>
            <person name="Qiang B."/>
            <person name="Wen Y."/>
            <person name="Hou Y."/>
            <person name="Yu J."/>
        </authorList>
    </citation>
    <scope>NUCLEOTIDE SEQUENCE [LARGE SCALE GENOMIC DNA]</scope>
    <source>
        <strain>301 / Serotype 2a</strain>
    </source>
</reference>
<reference key="3">
    <citation type="journal article" date="2003" name="Infect. Immun.">
        <title>Complete genome sequence and comparative genomics of Shigella flexneri serotype 2a strain 2457T.</title>
        <authorList>
            <person name="Wei J."/>
            <person name="Goldberg M.B."/>
            <person name="Burland V."/>
            <person name="Venkatesan M.M."/>
            <person name="Deng W."/>
            <person name="Fournier G."/>
            <person name="Mayhew G.F."/>
            <person name="Plunkett G. III"/>
            <person name="Rose D.J."/>
            <person name="Darling A."/>
            <person name="Mau B."/>
            <person name="Perna N.T."/>
            <person name="Payne S.M."/>
            <person name="Runyen-Janecky L.J."/>
            <person name="Zhou S."/>
            <person name="Schwartz D.C."/>
            <person name="Blattner F.R."/>
        </authorList>
    </citation>
    <scope>NUCLEOTIDE SEQUENCE [LARGE SCALE GENOMIC DNA]</scope>
    <source>
        <strain>ATCC 700930 / 2457T / Serotype 2a</strain>
    </source>
</reference>
<feature type="chain" id="PRO_0000059359" description="Disulfide bond formation protein B">
    <location>
        <begin position="1"/>
        <end position="176"/>
    </location>
</feature>
<feature type="topological domain" description="Cytoplasmic" evidence="2">
    <location>
        <begin position="1"/>
        <end position="14"/>
    </location>
</feature>
<feature type="transmembrane region" description="Helical" evidence="2">
    <location>
        <begin position="15"/>
        <end position="31"/>
    </location>
</feature>
<feature type="topological domain" description="Periplasmic" evidence="2">
    <location>
        <begin position="32"/>
        <end position="49"/>
    </location>
</feature>
<feature type="transmembrane region" description="Helical" evidence="2">
    <location>
        <begin position="50"/>
        <end position="65"/>
    </location>
</feature>
<feature type="topological domain" description="Cytoplasmic" evidence="2">
    <location>
        <begin position="66"/>
        <end position="71"/>
    </location>
</feature>
<feature type="transmembrane region" description="Helical" evidence="2">
    <location>
        <begin position="72"/>
        <end position="89"/>
    </location>
</feature>
<feature type="topological domain" description="Periplasmic" evidence="2">
    <location>
        <begin position="90"/>
        <end position="144"/>
    </location>
</feature>
<feature type="transmembrane region" description="Helical" evidence="2">
    <location>
        <begin position="145"/>
        <end position="163"/>
    </location>
</feature>
<feature type="topological domain" description="Cytoplasmic" evidence="2">
    <location>
        <begin position="164"/>
        <end position="176"/>
    </location>
</feature>
<feature type="disulfide bond" description="Redox-active" evidence="2">
    <location>
        <begin position="41"/>
        <end position="44"/>
    </location>
</feature>
<feature type="disulfide bond" description="Redox-active" evidence="2">
    <location>
        <begin position="104"/>
        <end position="130"/>
    </location>
</feature>
<feature type="sequence conflict" description="In Ref. 1; BAA07408." evidence="3" ref="1">
    <original>W</original>
    <variation>G</variation>
    <location>
        <position position="15"/>
    </location>
</feature>
<feature type="sequence conflict" description="In Ref. 1; BAA07408." evidence="3" ref="1">
    <original>A</original>
    <variation>G</variation>
    <location>
        <position position="29"/>
    </location>
</feature>
<feature type="sequence conflict" description="In Ref. 1; BAA07408." evidence="3" ref="1">
    <original>V</original>
    <variation>M</variation>
    <location>
        <position position="42"/>
    </location>
</feature>
<feature type="sequence conflict" description="In Ref. 1; BAA07408." evidence="3" ref="1">
    <original>M</original>
    <variation>L</variation>
    <location>
        <position position="140"/>
    </location>
</feature>